<protein>
    <recommendedName>
        <fullName evidence="5">Heat shock factor-binding protein</fullName>
        <shortName evidence="5">AtHSBP</shortName>
    </recommendedName>
</protein>
<keyword id="KW-0175">Coiled coil</keyword>
<keyword id="KW-0963">Cytoplasm</keyword>
<keyword id="KW-0539">Nucleus</keyword>
<keyword id="KW-1185">Reference proteome</keyword>
<keyword id="KW-0346">Stress response</keyword>
<sequence>MDGHDSEDTKQSTADMTAFVQNLLQQMQTRFQTMSDSIITKIDDMGGRINELEQSINDLRAEMGVEGTPPPASKSGDEPKTPASSS</sequence>
<organism>
    <name type="scientific">Arabidopsis thaliana</name>
    <name type="common">Mouse-ear cress</name>
    <dbReference type="NCBI Taxonomy" id="3702"/>
    <lineage>
        <taxon>Eukaryota</taxon>
        <taxon>Viridiplantae</taxon>
        <taxon>Streptophyta</taxon>
        <taxon>Embryophyta</taxon>
        <taxon>Tracheophyta</taxon>
        <taxon>Spermatophyta</taxon>
        <taxon>Magnoliopsida</taxon>
        <taxon>eudicotyledons</taxon>
        <taxon>Gunneridae</taxon>
        <taxon>Pentapetalae</taxon>
        <taxon>rosids</taxon>
        <taxon>malvids</taxon>
        <taxon>Brassicales</taxon>
        <taxon>Brassicaceae</taxon>
        <taxon>Camelineae</taxon>
        <taxon>Arabidopsis</taxon>
    </lineage>
</organism>
<accession>Q8GW48</accession>
<accession>O23431</accession>
<dbReference type="EMBL" id="Z97339">
    <property type="protein sequence ID" value="CAB10358.1"/>
    <property type="status" value="ALT_SEQ"/>
    <property type="molecule type" value="Genomic_DNA"/>
</dbReference>
<dbReference type="EMBL" id="AL161542">
    <property type="protein sequence ID" value="CAB78622.1"/>
    <property type="status" value="ALT_SEQ"/>
    <property type="molecule type" value="Genomic_DNA"/>
</dbReference>
<dbReference type="EMBL" id="CP002687">
    <property type="protein sequence ID" value="AEE83654.1"/>
    <property type="molecule type" value="Genomic_DNA"/>
</dbReference>
<dbReference type="EMBL" id="AK119086">
    <property type="protein sequence ID" value="BAC43661.1"/>
    <property type="molecule type" value="mRNA"/>
</dbReference>
<dbReference type="EMBL" id="BT004664">
    <property type="protein sequence ID" value="AAO42910.1"/>
    <property type="molecule type" value="mRNA"/>
</dbReference>
<dbReference type="PIR" id="D71423">
    <property type="entry name" value="D71423"/>
</dbReference>
<dbReference type="RefSeq" id="NP_849392.4">
    <property type="nucleotide sequence ID" value="NM_179061.5"/>
</dbReference>
<dbReference type="SMR" id="Q8GW48"/>
<dbReference type="FunCoup" id="Q8GW48">
    <property type="interactions" value="707"/>
</dbReference>
<dbReference type="IntAct" id="Q8GW48">
    <property type="interactions" value="1"/>
</dbReference>
<dbReference type="STRING" id="3702.Q8GW48"/>
<dbReference type="GlyGen" id="Q8GW48">
    <property type="glycosylation" value="1 site"/>
</dbReference>
<dbReference type="iPTMnet" id="Q8GW48"/>
<dbReference type="MetOSite" id="Q8GW48"/>
<dbReference type="PaxDb" id="3702-AT4G15802.1"/>
<dbReference type="ProMEX" id="Q8GW48"/>
<dbReference type="ProteomicsDB" id="230145"/>
<dbReference type="DNASU" id="827261"/>
<dbReference type="EnsemblPlants" id="AT4G15802.1">
    <property type="protein sequence ID" value="AT4G15802.1"/>
    <property type="gene ID" value="AT4G15802"/>
</dbReference>
<dbReference type="GeneID" id="827261"/>
<dbReference type="Gramene" id="AT4G15802.1">
    <property type="protein sequence ID" value="AT4G15802.1"/>
    <property type="gene ID" value="AT4G15802"/>
</dbReference>
<dbReference type="KEGG" id="ath:AT4G15802"/>
<dbReference type="Araport" id="AT4G15802"/>
<dbReference type="TAIR" id="AT4G15802">
    <property type="gene designation" value="HSBP"/>
</dbReference>
<dbReference type="eggNOG" id="KOG4117">
    <property type="taxonomic scope" value="Eukaryota"/>
</dbReference>
<dbReference type="HOGENOM" id="CLU_149552_1_2_1"/>
<dbReference type="InParanoid" id="Q8GW48"/>
<dbReference type="OMA" id="MERANMD"/>
<dbReference type="PhylomeDB" id="Q8GW48"/>
<dbReference type="PRO" id="PR:Q8GW48"/>
<dbReference type="Proteomes" id="UP000006548">
    <property type="component" value="Chromosome 4"/>
</dbReference>
<dbReference type="ExpressionAtlas" id="Q8GW48">
    <property type="expression patterns" value="baseline and differential"/>
</dbReference>
<dbReference type="GO" id="GO:0005829">
    <property type="term" value="C:cytosol"/>
    <property type="evidence" value="ECO:0000314"/>
    <property type="project" value="UniProtKB"/>
</dbReference>
<dbReference type="GO" id="GO:0005794">
    <property type="term" value="C:Golgi apparatus"/>
    <property type="evidence" value="ECO:0007005"/>
    <property type="project" value="TAIR"/>
</dbReference>
<dbReference type="GO" id="GO:0005634">
    <property type="term" value="C:nucleus"/>
    <property type="evidence" value="ECO:0000314"/>
    <property type="project" value="UniProtKB"/>
</dbReference>
<dbReference type="GO" id="GO:0031072">
    <property type="term" value="F:heat shock protein binding"/>
    <property type="evidence" value="ECO:0000353"/>
    <property type="project" value="TAIR"/>
</dbReference>
<dbReference type="GO" id="GO:0003714">
    <property type="term" value="F:transcription corepressor activity"/>
    <property type="evidence" value="ECO:0007669"/>
    <property type="project" value="InterPro"/>
</dbReference>
<dbReference type="GO" id="GO:0070370">
    <property type="term" value="P:cellular heat acclimation"/>
    <property type="evidence" value="ECO:0000315"/>
    <property type="project" value="TAIR"/>
</dbReference>
<dbReference type="GO" id="GO:0009408">
    <property type="term" value="P:response to heat"/>
    <property type="evidence" value="ECO:0000315"/>
    <property type="project" value="TAIR"/>
</dbReference>
<dbReference type="GO" id="GO:0048316">
    <property type="term" value="P:seed development"/>
    <property type="evidence" value="ECO:0000315"/>
    <property type="project" value="UniProtKB"/>
</dbReference>
<dbReference type="FunFam" id="1.20.5.430:FF:000003">
    <property type="entry name" value="Heat shock factor binding protein"/>
    <property type="match status" value="1"/>
</dbReference>
<dbReference type="Gene3D" id="1.20.5.430">
    <property type="match status" value="1"/>
</dbReference>
<dbReference type="InterPro" id="IPR009643">
    <property type="entry name" value="HS1-bd"/>
</dbReference>
<dbReference type="PANTHER" id="PTHR19424">
    <property type="entry name" value="HEAT SHOCK FACTOR BINDING PROTEIN 1"/>
    <property type="match status" value="1"/>
</dbReference>
<dbReference type="PANTHER" id="PTHR19424:SF9">
    <property type="entry name" value="HEAT SHOCK FACTOR-BINDING PROTEIN"/>
    <property type="match status" value="1"/>
</dbReference>
<dbReference type="Pfam" id="PF06825">
    <property type="entry name" value="HSBP1"/>
    <property type="match status" value="1"/>
</dbReference>
<proteinExistence type="evidence at protein level"/>
<comment type="function">
    <text evidence="3 4">Negative regulator of the heat shock (HS) response. Affects negatively HSFA1B DNA-binding capacity in vitro (PubMed:20388662). Involved in acquired thermotolerance but not basal thermotolerance (PubMed:20388662). Crucial for seed development, after fertilization and during embryogenesis (PubMed:20388662, PubMed:20657173).</text>
</comment>
<comment type="subunit">
    <text evidence="3">Homohexamer (PubMed:20388662). Interacts with HSFA1A, HSFA1B and HSFA2 (PubMed:20388662).</text>
</comment>
<comment type="subcellular location">
    <subcellularLocation>
        <location evidence="3">Nucleus</location>
    </subcellularLocation>
    <subcellularLocation>
        <location evidence="3">Cytoplasm</location>
        <location evidence="3">Cytosol</location>
    </subcellularLocation>
    <text evidence="3">Translocates from the cytosol to the nucleus upon heat shock (HS).</text>
</comment>
<comment type="tissue specificity">
    <text evidence="3">Mostly expressed in siliques and flowers, and, to a lower extent, in roots, stems and leaves.</text>
</comment>
<comment type="induction">
    <text evidence="3">Reversibly induced by heat shock (HS).</text>
</comment>
<comment type="disruption phenotype">
    <text evidence="3 4">Early flowering, short siliques and seed abortion (PubMed:20388662). The seed abortion occurs after fertilization and during embryogenesis (PubMed:20657173). Differential HSP expression, mainly during the recovery from heat shock (HS). Increased seedling survival rates during acquired thermotolerance (AT) tests, but not in response to basal thermotolerance (BT) tests (PubMed:20388662).</text>
</comment>
<comment type="similarity">
    <text evidence="6">Belongs to the HSBP1 family.</text>
</comment>
<comment type="sequence caution" evidence="6">
    <conflict type="erroneous gene model prediction">
        <sequence resource="EMBL-CDS" id="CAB10358"/>
    </conflict>
</comment>
<comment type="sequence caution" evidence="6">
    <conflict type="erroneous gene model prediction">
        <sequence resource="EMBL-CDS" id="CAB78622"/>
    </conflict>
</comment>
<feature type="chain" id="PRO_0000444378" description="Heat shock factor-binding protein">
    <location>
        <begin position="1"/>
        <end position="86"/>
    </location>
</feature>
<feature type="region of interest" description="Required for interactions with heat shock factors (HSFs)" evidence="4">
    <location>
        <begin position="42"/>
        <end position="52"/>
    </location>
</feature>
<feature type="region of interest" description="Disordered" evidence="2">
    <location>
        <begin position="59"/>
        <end position="86"/>
    </location>
</feature>
<feature type="coiled-coil region" evidence="1">
    <location>
        <begin position="34"/>
        <end position="63"/>
    </location>
</feature>
<feature type="site" description="Required for nucleus localization after heat shock (HS)" evidence="3 4">
    <location>
        <position position="35"/>
    </location>
</feature>
<feature type="mutagenesis site" description="Dominantly expressed in the cytoplasm in normal conditions. Impaired translocation from the cytosol to the nucleus upon heat shock (HS)." evidence="3 4">
    <original>S</original>
    <variation>A</variation>
    <location>
        <position position="35"/>
    </location>
</feature>
<feature type="mutagenesis site" description="Expressed both in the cytoplasm and nucleus in normal conditions, but strongly reduced interaction with HSFA1A and HSFA1B; when associated with K-45." evidence="4">
    <original>I</original>
    <variation>M</variation>
    <location>
        <position position="42"/>
    </location>
</feature>
<feature type="mutagenesis site" description="Expressed both in the cytoplasm and nucleus in normal conditions, but strongly reduced interaction with HSFA1A and HSFA1B; when associated with M-42." evidence="4">
    <original>M</original>
    <variation>K</variation>
    <location>
        <position position="45"/>
    </location>
</feature>
<feature type="mutagenesis site" description="Expressed both in the cytoplasm and nucleus in normal conditions, but strongly reduced interaction with HSFA1A and HSFA1B; when associated with K-52." evidence="4">
    <original>I</original>
    <variation>K</variation>
    <location>
        <position position="49"/>
    </location>
</feature>
<feature type="mutagenesis site" description="Expressed both in the cytoplasm and nucleus in normal conditions, but strongly reduced interaction with HSFA1A and HSFA1B; when associated with K-49." evidence="4">
    <original>L</original>
    <variation>K</variation>
    <location>
        <position position="52"/>
    </location>
</feature>
<reference key="1">
    <citation type="journal article" date="1998" name="Nature">
        <title>Analysis of 1.9 Mb of contiguous sequence from chromosome 4 of Arabidopsis thaliana.</title>
        <authorList>
            <person name="Bevan M."/>
            <person name="Bancroft I."/>
            <person name="Bent E."/>
            <person name="Love K."/>
            <person name="Goodman H.M."/>
            <person name="Dean C."/>
            <person name="Bergkamp R."/>
            <person name="Dirkse W."/>
            <person name="van Staveren M."/>
            <person name="Stiekema W."/>
            <person name="Drost L."/>
            <person name="Ridley P."/>
            <person name="Hudson S.-A."/>
            <person name="Patel K."/>
            <person name="Murphy G."/>
            <person name="Piffanelli P."/>
            <person name="Wedler H."/>
            <person name="Wedler E."/>
            <person name="Wambutt R."/>
            <person name="Weitzenegger T."/>
            <person name="Pohl T."/>
            <person name="Terryn N."/>
            <person name="Gielen J."/>
            <person name="Villarroel R."/>
            <person name="De Clercq R."/>
            <person name="van Montagu M."/>
            <person name="Lecharny A."/>
            <person name="Aubourg S."/>
            <person name="Gy I."/>
            <person name="Kreis M."/>
            <person name="Lao N."/>
            <person name="Kavanagh T."/>
            <person name="Hempel S."/>
            <person name="Kotter P."/>
            <person name="Entian K.-D."/>
            <person name="Rieger M."/>
            <person name="Schaefer M."/>
            <person name="Funk B."/>
            <person name="Mueller-Auer S."/>
            <person name="Silvey M."/>
            <person name="James R."/>
            <person name="Monfort A."/>
            <person name="Pons A."/>
            <person name="Puigdomenech P."/>
            <person name="Douka A."/>
            <person name="Voukelatou E."/>
            <person name="Milioni D."/>
            <person name="Hatzopoulos P."/>
            <person name="Piravandi E."/>
            <person name="Obermaier B."/>
            <person name="Hilbert H."/>
            <person name="Duesterhoeft A."/>
            <person name="Moores T."/>
            <person name="Jones J.D.G."/>
            <person name="Eneva T."/>
            <person name="Palme K."/>
            <person name="Benes V."/>
            <person name="Rechmann S."/>
            <person name="Ansorge W."/>
            <person name="Cooke R."/>
            <person name="Berger C."/>
            <person name="Delseny M."/>
            <person name="Voet M."/>
            <person name="Volckaert G."/>
            <person name="Mewes H.-W."/>
            <person name="Klosterman S."/>
            <person name="Schueller C."/>
            <person name="Chalwatzis N."/>
        </authorList>
    </citation>
    <scope>NUCLEOTIDE SEQUENCE [LARGE SCALE GENOMIC DNA]</scope>
    <source>
        <strain>cv. Columbia</strain>
    </source>
</reference>
<reference key="2">
    <citation type="journal article" date="1999" name="Nature">
        <title>Sequence and analysis of chromosome 4 of the plant Arabidopsis thaliana.</title>
        <authorList>
            <person name="Mayer K.F.X."/>
            <person name="Schueller C."/>
            <person name="Wambutt R."/>
            <person name="Murphy G."/>
            <person name="Volckaert G."/>
            <person name="Pohl T."/>
            <person name="Duesterhoeft A."/>
            <person name="Stiekema W."/>
            <person name="Entian K.-D."/>
            <person name="Terryn N."/>
            <person name="Harris B."/>
            <person name="Ansorge W."/>
            <person name="Brandt P."/>
            <person name="Grivell L.A."/>
            <person name="Rieger M."/>
            <person name="Weichselgartner M."/>
            <person name="de Simone V."/>
            <person name="Obermaier B."/>
            <person name="Mache R."/>
            <person name="Mueller M."/>
            <person name="Kreis M."/>
            <person name="Delseny M."/>
            <person name="Puigdomenech P."/>
            <person name="Watson M."/>
            <person name="Schmidtheini T."/>
            <person name="Reichert B."/>
            <person name="Portetelle D."/>
            <person name="Perez-Alonso M."/>
            <person name="Boutry M."/>
            <person name="Bancroft I."/>
            <person name="Vos P."/>
            <person name="Hoheisel J."/>
            <person name="Zimmermann W."/>
            <person name="Wedler H."/>
            <person name="Ridley P."/>
            <person name="Langham S.-A."/>
            <person name="McCullagh B."/>
            <person name="Bilham L."/>
            <person name="Robben J."/>
            <person name="van der Schueren J."/>
            <person name="Grymonprez B."/>
            <person name="Chuang Y.-J."/>
            <person name="Vandenbussche F."/>
            <person name="Braeken M."/>
            <person name="Weltjens I."/>
            <person name="Voet M."/>
            <person name="Bastiaens I."/>
            <person name="Aert R."/>
            <person name="Defoor E."/>
            <person name="Weitzenegger T."/>
            <person name="Bothe G."/>
            <person name="Ramsperger U."/>
            <person name="Hilbert H."/>
            <person name="Braun M."/>
            <person name="Holzer E."/>
            <person name="Brandt A."/>
            <person name="Peters S."/>
            <person name="van Staveren M."/>
            <person name="Dirkse W."/>
            <person name="Mooijman P."/>
            <person name="Klein Lankhorst R."/>
            <person name="Rose M."/>
            <person name="Hauf J."/>
            <person name="Koetter P."/>
            <person name="Berneiser S."/>
            <person name="Hempel S."/>
            <person name="Feldpausch M."/>
            <person name="Lamberth S."/>
            <person name="Van den Daele H."/>
            <person name="De Keyser A."/>
            <person name="Buysshaert C."/>
            <person name="Gielen J."/>
            <person name="Villarroel R."/>
            <person name="De Clercq R."/>
            <person name="van Montagu M."/>
            <person name="Rogers J."/>
            <person name="Cronin A."/>
            <person name="Quail M.A."/>
            <person name="Bray-Allen S."/>
            <person name="Clark L."/>
            <person name="Doggett J."/>
            <person name="Hall S."/>
            <person name="Kay M."/>
            <person name="Lennard N."/>
            <person name="McLay K."/>
            <person name="Mayes R."/>
            <person name="Pettett A."/>
            <person name="Rajandream M.A."/>
            <person name="Lyne M."/>
            <person name="Benes V."/>
            <person name="Rechmann S."/>
            <person name="Borkova D."/>
            <person name="Bloecker H."/>
            <person name="Scharfe M."/>
            <person name="Grimm M."/>
            <person name="Loehnert T.-H."/>
            <person name="Dose S."/>
            <person name="de Haan M."/>
            <person name="Maarse A.C."/>
            <person name="Schaefer M."/>
            <person name="Mueller-Auer S."/>
            <person name="Gabel C."/>
            <person name="Fuchs M."/>
            <person name="Fartmann B."/>
            <person name="Granderath K."/>
            <person name="Dauner D."/>
            <person name="Herzl A."/>
            <person name="Neumann S."/>
            <person name="Argiriou A."/>
            <person name="Vitale D."/>
            <person name="Liguori R."/>
            <person name="Piravandi E."/>
            <person name="Massenet O."/>
            <person name="Quigley F."/>
            <person name="Clabauld G."/>
            <person name="Muendlein A."/>
            <person name="Felber R."/>
            <person name="Schnabl S."/>
            <person name="Hiller R."/>
            <person name="Schmidt W."/>
            <person name="Lecharny A."/>
            <person name="Aubourg S."/>
            <person name="Chefdor F."/>
            <person name="Cooke R."/>
            <person name="Berger C."/>
            <person name="Monfort A."/>
            <person name="Casacuberta E."/>
            <person name="Gibbons T."/>
            <person name="Weber N."/>
            <person name="Vandenbol M."/>
            <person name="Bargues M."/>
            <person name="Terol J."/>
            <person name="Torres A."/>
            <person name="Perez-Perez A."/>
            <person name="Purnelle B."/>
            <person name="Bent E."/>
            <person name="Johnson S."/>
            <person name="Tacon D."/>
            <person name="Jesse T."/>
            <person name="Heijnen L."/>
            <person name="Schwarz S."/>
            <person name="Scholler P."/>
            <person name="Heber S."/>
            <person name="Francs P."/>
            <person name="Bielke C."/>
            <person name="Frishman D."/>
            <person name="Haase D."/>
            <person name="Lemcke K."/>
            <person name="Mewes H.-W."/>
            <person name="Stocker S."/>
            <person name="Zaccaria P."/>
            <person name="Bevan M."/>
            <person name="Wilson R.K."/>
            <person name="de la Bastide M."/>
            <person name="Habermann K."/>
            <person name="Parnell L."/>
            <person name="Dedhia N."/>
            <person name="Gnoj L."/>
            <person name="Schutz K."/>
            <person name="Huang E."/>
            <person name="Spiegel L."/>
            <person name="Sekhon M."/>
            <person name="Murray J."/>
            <person name="Sheet P."/>
            <person name="Cordes M."/>
            <person name="Abu-Threideh J."/>
            <person name="Stoneking T."/>
            <person name="Kalicki J."/>
            <person name="Graves T."/>
            <person name="Harmon G."/>
            <person name="Edwards J."/>
            <person name="Latreille P."/>
            <person name="Courtney L."/>
            <person name="Cloud J."/>
            <person name="Abbott A."/>
            <person name="Scott K."/>
            <person name="Johnson D."/>
            <person name="Minx P."/>
            <person name="Bentley D."/>
            <person name="Fulton B."/>
            <person name="Miller N."/>
            <person name="Greco T."/>
            <person name="Kemp K."/>
            <person name="Kramer J."/>
            <person name="Fulton L."/>
            <person name="Mardis E."/>
            <person name="Dante M."/>
            <person name="Pepin K."/>
            <person name="Hillier L.W."/>
            <person name="Nelson J."/>
            <person name="Spieth J."/>
            <person name="Ryan E."/>
            <person name="Andrews S."/>
            <person name="Geisel C."/>
            <person name="Layman D."/>
            <person name="Du H."/>
            <person name="Ali J."/>
            <person name="Berghoff A."/>
            <person name="Jones K."/>
            <person name="Drone K."/>
            <person name="Cotton M."/>
            <person name="Joshu C."/>
            <person name="Antonoiu B."/>
            <person name="Zidanic M."/>
            <person name="Strong C."/>
            <person name="Sun H."/>
            <person name="Lamar B."/>
            <person name="Yordan C."/>
            <person name="Ma P."/>
            <person name="Zhong J."/>
            <person name="Preston R."/>
            <person name="Vil D."/>
            <person name="Shekher M."/>
            <person name="Matero A."/>
            <person name="Shah R."/>
            <person name="Swaby I.K."/>
            <person name="O'Shaughnessy A."/>
            <person name="Rodriguez M."/>
            <person name="Hoffman J."/>
            <person name="Till S."/>
            <person name="Granat S."/>
            <person name="Shohdy N."/>
            <person name="Hasegawa A."/>
            <person name="Hameed A."/>
            <person name="Lodhi M."/>
            <person name="Johnson A."/>
            <person name="Chen E."/>
            <person name="Marra M.A."/>
            <person name="Martienssen R."/>
            <person name="McCombie W.R."/>
        </authorList>
    </citation>
    <scope>NUCLEOTIDE SEQUENCE [LARGE SCALE GENOMIC DNA]</scope>
    <source>
        <strain>cv. Columbia</strain>
    </source>
</reference>
<reference key="3">
    <citation type="journal article" date="2017" name="Plant J.">
        <title>Araport11: a complete reannotation of the Arabidopsis thaliana reference genome.</title>
        <authorList>
            <person name="Cheng C.Y."/>
            <person name="Krishnakumar V."/>
            <person name="Chan A.P."/>
            <person name="Thibaud-Nissen F."/>
            <person name="Schobel S."/>
            <person name="Town C.D."/>
        </authorList>
    </citation>
    <scope>GENOME REANNOTATION</scope>
    <source>
        <strain>cv. Columbia</strain>
    </source>
</reference>
<reference key="4">
    <citation type="journal article" date="2002" name="Science">
        <title>Functional annotation of a full-length Arabidopsis cDNA collection.</title>
        <authorList>
            <person name="Seki M."/>
            <person name="Narusaka M."/>
            <person name="Kamiya A."/>
            <person name="Ishida J."/>
            <person name="Satou M."/>
            <person name="Sakurai T."/>
            <person name="Nakajima M."/>
            <person name="Enju A."/>
            <person name="Akiyama K."/>
            <person name="Oono Y."/>
            <person name="Muramatsu M."/>
            <person name="Hayashizaki Y."/>
            <person name="Kawai J."/>
            <person name="Carninci P."/>
            <person name="Itoh M."/>
            <person name="Ishii Y."/>
            <person name="Arakawa T."/>
            <person name="Shibata K."/>
            <person name="Shinagawa A."/>
            <person name="Shinozaki K."/>
        </authorList>
    </citation>
    <scope>NUCLEOTIDE SEQUENCE [LARGE SCALE MRNA]</scope>
    <source>
        <strain>cv. Columbia</strain>
    </source>
</reference>
<reference key="5">
    <citation type="journal article" date="2003" name="Science">
        <title>Empirical analysis of transcriptional activity in the Arabidopsis genome.</title>
        <authorList>
            <person name="Yamada K."/>
            <person name="Lim J."/>
            <person name="Dale J.M."/>
            <person name="Chen H."/>
            <person name="Shinn P."/>
            <person name="Palm C.J."/>
            <person name="Southwick A.M."/>
            <person name="Wu H.C."/>
            <person name="Kim C.J."/>
            <person name="Nguyen M."/>
            <person name="Pham P.K."/>
            <person name="Cheuk R.F."/>
            <person name="Karlin-Newmann G."/>
            <person name="Liu S.X."/>
            <person name="Lam B."/>
            <person name="Sakano H."/>
            <person name="Wu T."/>
            <person name="Yu G."/>
            <person name="Miranda M."/>
            <person name="Quach H.L."/>
            <person name="Tripp M."/>
            <person name="Chang C.H."/>
            <person name="Lee J.M."/>
            <person name="Toriumi M.J."/>
            <person name="Chan M.M."/>
            <person name="Tang C.C."/>
            <person name="Onodera C.S."/>
            <person name="Deng J.M."/>
            <person name="Akiyama K."/>
            <person name="Ansari Y."/>
            <person name="Arakawa T."/>
            <person name="Banh J."/>
            <person name="Banno F."/>
            <person name="Bowser L."/>
            <person name="Brooks S.Y."/>
            <person name="Carninci P."/>
            <person name="Chao Q."/>
            <person name="Choy N."/>
            <person name="Enju A."/>
            <person name="Goldsmith A.D."/>
            <person name="Gurjal M."/>
            <person name="Hansen N.F."/>
            <person name="Hayashizaki Y."/>
            <person name="Johnson-Hopson C."/>
            <person name="Hsuan V.W."/>
            <person name="Iida K."/>
            <person name="Karnes M."/>
            <person name="Khan S."/>
            <person name="Koesema E."/>
            <person name="Ishida J."/>
            <person name="Jiang P.X."/>
            <person name="Jones T."/>
            <person name="Kawai J."/>
            <person name="Kamiya A."/>
            <person name="Meyers C."/>
            <person name="Nakajima M."/>
            <person name="Narusaka M."/>
            <person name="Seki M."/>
            <person name="Sakurai T."/>
            <person name="Satou M."/>
            <person name="Tamse R."/>
            <person name="Vaysberg M."/>
            <person name="Wallender E.K."/>
            <person name="Wong C."/>
            <person name="Yamamura Y."/>
            <person name="Yuan S."/>
            <person name="Shinozaki K."/>
            <person name="Davis R.W."/>
            <person name="Theologis A."/>
            <person name="Ecker J.R."/>
        </authorList>
    </citation>
    <scope>NUCLEOTIDE SEQUENCE [LARGE SCALE MRNA]</scope>
    <source>
        <strain>cv. Columbia</strain>
    </source>
</reference>
<reference key="6">
    <citation type="journal article" date="2010" name="Plant Physiol.">
        <title>Cytosol-localized heat shock factor-binding protein, AtHSBP, functions as a negative regulator of heat shock response by translocation to the nucleus and is required for seed development in Arabidopsis.</title>
        <authorList>
            <person name="Hsu S.-F."/>
            <person name="Lai H.-C."/>
            <person name="Jinn T.-L."/>
        </authorList>
    </citation>
    <scope>FUNCTION</scope>
    <scope>DISRUPTION PHENOTYPE</scope>
    <scope>MUTAGENESIS OF SER-35</scope>
    <scope>INDUCTION BY HEAT SHOCK</scope>
    <scope>SUBCELLULAR LOCATION</scope>
    <scope>INTERACTION WITH HSFA1A; HSFA1B AND HSFA2</scope>
    <scope>SUBUNIT</scope>
    <source>
        <strain>cv. Columbia</strain>
    </source>
</reference>
<reference key="7">
    <citation type="journal article" date="2010" name="Plant Signal. Behav.">
        <title>AtHSBP functions in seed development and the motif is required for subcellular localization and interaction with AtHSFs.</title>
        <authorList>
            <person name="Hsu S.-F."/>
            <person name="Jinn T.-L."/>
        </authorList>
    </citation>
    <scope>FUNCTION</scope>
    <scope>DISRUPTION PHENOTYPE</scope>
    <scope>MUTAGENESIS OF SER-35; ILE-42; MET-45; ILE-49 AND LEU-52</scope>
    <scope>INTERACTION WITH HSFA1A AND HSFA1B</scope>
    <source>
        <strain>cv. Columbia</strain>
    </source>
</reference>
<gene>
    <name evidence="8" type="primary">HSBP</name>
    <name evidence="7" type="ordered locus">At4g15802</name>
    <name evidence="9" type="ORF">dl3940c</name>
</gene>
<evidence type="ECO:0000255" key="1"/>
<evidence type="ECO:0000256" key="2">
    <source>
        <dbReference type="SAM" id="MobiDB-lite"/>
    </source>
</evidence>
<evidence type="ECO:0000269" key="3">
    <source>
    </source>
</evidence>
<evidence type="ECO:0000269" key="4">
    <source>
    </source>
</evidence>
<evidence type="ECO:0000303" key="5">
    <source>
    </source>
</evidence>
<evidence type="ECO:0000305" key="6"/>
<evidence type="ECO:0000312" key="7">
    <source>
        <dbReference type="Araport" id="AT4G15802"/>
    </source>
</evidence>
<evidence type="ECO:0000312" key="8">
    <source>
        <dbReference type="EMBL" id="AEE83654.1"/>
    </source>
</evidence>
<evidence type="ECO:0000312" key="9">
    <source>
        <dbReference type="EMBL" id="CAB10358.1"/>
    </source>
</evidence>
<name>HSBP_ARATH</name>